<name>FAPR_BACCN</name>
<comment type="function">
    <text evidence="1">Transcriptional factor involved in regulation of membrane lipid biosynthesis by repressing genes involved in fatty acid and phospholipid metabolism.</text>
</comment>
<comment type="similarity">
    <text evidence="1">Belongs to the FapR family.</text>
</comment>
<gene>
    <name evidence="1" type="primary">fapR</name>
    <name type="ordered locus">Bcer98_2506</name>
</gene>
<reference key="1">
    <citation type="journal article" date="2008" name="Chem. Biol. Interact.">
        <title>Extending the Bacillus cereus group genomics to putative food-borne pathogens of different toxicity.</title>
        <authorList>
            <person name="Lapidus A."/>
            <person name="Goltsman E."/>
            <person name="Auger S."/>
            <person name="Galleron N."/>
            <person name="Segurens B."/>
            <person name="Dossat C."/>
            <person name="Land M.L."/>
            <person name="Broussolle V."/>
            <person name="Brillard J."/>
            <person name="Guinebretiere M.-H."/>
            <person name="Sanchis V."/>
            <person name="Nguen-the C."/>
            <person name="Lereclus D."/>
            <person name="Richardson P."/>
            <person name="Wincker P."/>
            <person name="Weissenbach J."/>
            <person name="Ehrlich S.D."/>
            <person name="Sorokin A."/>
        </authorList>
    </citation>
    <scope>NUCLEOTIDE SEQUENCE [LARGE SCALE GENOMIC DNA]</scope>
    <source>
        <strain>DSM 22905 / CIP 110041 / 391-98 / NVH 391-98</strain>
    </source>
</reference>
<proteinExistence type="inferred from homology"/>
<protein>
    <recommendedName>
        <fullName evidence="1">Transcription factor FapR</fullName>
    </recommendedName>
    <alternativeName>
        <fullName evidence="1">Fatty acid and phospholipid biosynthesis regulator</fullName>
    </alternativeName>
</protein>
<organism>
    <name type="scientific">Bacillus cytotoxicus (strain DSM 22905 / CIP 110041 / 391-98 / NVH 391-98)</name>
    <dbReference type="NCBI Taxonomy" id="315749"/>
    <lineage>
        <taxon>Bacteria</taxon>
        <taxon>Bacillati</taxon>
        <taxon>Bacillota</taxon>
        <taxon>Bacilli</taxon>
        <taxon>Bacillales</taxon>
        <taxon>Bacillaceae</taxon>
        <taxon>Bacillus</taxon>
        <taxon>Bacillus cereus group</taxon>
    </lineage>
</organism>
<dbReference type="EMBL" id="CP000764">
    <property type="protein sequence ID" value="ABS22742.1"/>
    <property type="molecule type" value="Genomic_DNA"/>
</dbReference>
<dbReference type="RefSeq" id="WP_012094948.1">
    <property type="nucleotide sequence ID" value="NC_009674.1"/>
</dbReference>
<dbReference type="SMR" id="A7GRI4"/>
<dbReference type="STRING" id="315749.Bcer98_2506"/>
<dbReference type="GeneID" id="33897761"/>
<dbReference type="KEGG" id="bcy:Bcer98_2506"/>
<dbReference type="eggNOG" id="COG1349">
    <property type="taxonomic scope" value="Bacteria"/>
</dbReference>
<dbReference type="eggNOG" id="COG2050">
    <property type="taxonomic scope" value="Bacteria"/>
</dbReference>
<dbReference type="HOGENOM" id="CLU_095708_0_0_9"/>
<dbReference type="OrthoDB" id="1706183at2"/>
<dbReference type="Proteomes" id="UP000002300">
    <property type="component" value="Chromosome"/>
</dbReference>
<dbReference type="GO" id="GO:0003677">
    <property type="term" value="F:DNA binding"/>
    <property type="evidence" value="ECO:0007669"/>
    <property type="project" value="UniProtKB-KW"/>
</dbReference>
<dbReference type="GO" id="GO:0003700">
    <property type="term" value="F:DNA-binding transcription factor activity"/>
    <property type="evidence" value="ECO:0007669"/>
    <property type="project" value="UniProtKB-UniRule"/>
</dbReference>
<dbReference type="GO" id="GO:0006633">
    <property type="term" value="P:fatty acid biosynthetic process"/>
    <property type="evidence" value="ECO:0007669"/>
    <property type="project" value="UniProtKB-KW"/>
</dbReference>
<dbReference type="GO" id="GO:0045892">
    <property type="term" value="P:negative regulation of DNA-templated transcription"/>
    <property type="evidence" value="ECO:0007669"/>
    <property type="project" value="UniProtKB-UniRule"/>
</dbReference>
<dbReference type="GO" id="GO:0045717">
    <property type="term" value="P:negative regulation of fatty acid biosynthetic process"/>
    <property type="evidence" value="ECO:0007669"/>
    <property type="project" value="UniProtKB-UniRule"/>
</dbReference>
<dbReference type="CDD" id="cd03440">
    <property type="entry name" value="hot_dog"/>
    <property type="match status" value="1"/>
</dbReference>
<dbReference type="Gene3D" id="3.10.129.10">
    <property type="entry name" value="Hotdog Thioesterase"/>
    <property type="match status" value="1"/>
</dbReference>
<dbReference type="Gene3D" id="1.10.10.10">
    <property type="entry name" value="Winged helix-like DNA-binding domain superfamily/Winged helix DNA-binding domain"/>
    <property type="match status" value="1"/>
</dbReference>
<dbReference type="HAMAP" id="MF_01814">
    <property type="entry name" value="Transcrip_fact_FapR"/>
    <property type="match status" value="1"/>
</dbReference>
<dbReference type="InterPro" id="IPR029069">
    <property type="entry name" value="HotDog_dom_sf"/>
</dbReference>
<dbReference type="InterPro" id="IPR006683">
    <property type="entry name" value="Thioestr_dom"/>
</dbReference>
<dbReference type="InterPro" id="IPR017275">
    <property type="entry name" value="Transcription_factor_FapR"/>
</dbReference>
<dbReference type="InterPro" id="IPR036388">
    <property type="entry name" value="WH-like_DNA-bd_sf"/>
</dbReference>
<dbReference type="InterPro" id="IPR036390">
    <property type="entry name" value="WH_DNA-bd_sf"/>
</dbReference>
<dbReference type="NCBIfam" id="NF003359">
    <property type="entry name" value="PRK04424.1"/>
    <property type="match status" value="1"/>
</dbReference>
<dbReference type="Pfam" id="PF03061">
    <property type="entry name" value="4HBT"/>
    <property type="match status" value="1"/>
</dbReference>
<dbReference type="PIRSF" id="PIRSF037733">
    <property type="entry name" value="Transcription_factor_FapR"/>
    <property type="match status" value="1"/>
</dbReference>
<dbReference type="SUPFAM" id="SSF54637">
    <property type="entry name" value="Thioesterase/thiol ester dehydrase-isomerase"/>
    <property type="match status" value="1"/>
</dbReference>
<dbReference type="SUPFAM" id="SSF46785">
    <property type="entry name" value="Winged helix' DNA-binding domain"/>
    <property type="match status" value="1"/>
</dbReference>
<sequence length="197" mass="22738">MKKRRSKKERQALLQQTIETNPFITDEDLAERFQVSIQTVRLDRMELSIPELRERIKHVATKNHEENVKSLPLEEIVGEIIDIELDRHAISIFEVKLEHVFQRNQIARGHHLFAQANSLAVAVIDEDLALTAKSTIRYIRPVKLGERVVAKARVEDVENDKGRTIVKVRSFVGEELVFTGTFEMYRSSNYSEEGNSL</sequence>
<feature type="chain" id="PRO_1000088302" description="Transcription factor FapR">
    <location>
        <begin position="1"/>
        <end position="197"/>
    </location>
</feature>
<evidence type="ECO:0000255" key="1">
    <source>
        <dbReference type="HAMAP-Rule" id="MF_01814"/>
    </source>
</evidence>
<keyword id="KW-0238">DNA-binding</keyword>
<keyword id="KW-0275">Fatty acid biosynthesis</keyword>
<keyword id="KW-0276">Fatty acid metabolism</keyword>
<keyword id="KW-0444">Lipid biosynthesis</keyword>
<keyword id="KW-0443">Lipid metabolism</keyword>
<keyword id="KW-0678">Repressor</keyword>
<keyword id="KW-0804">Transcription</keyword>
<keyword id="KW-0805">Transcription regulation</keyword>
<accession>A7GRI4</accession>